<keyword id="KW-0027">Amidation</keyword>
<keyword id="KW-1015">Disulfide bond</keyword>
<keyword id="KW-0872">Ion channel impairing toxin</keyword>
<keyword id="KW-0960">Knottin</keyword>
<keyword id="KW-0528">Neurotoxin</keyword>
<keyword id="KW-0638">Presynaptic neurotoxin</keyword>
<keyword id="KW-0964">Secreted</keyword>
<keyword id="KW-0732">Signal</keyword>
<keyword id="KW-0800">Toxin</keyword>
<keyword id="KW-0738">Voltage-gated sodium channel impairing toxin</keyword>
<proteinExistence type="evidence at transcript level"/>
<name>H3M01_CYRHA</name>
<sequence length="83" mass="9165">MKASMFLALAGLVLLFVVGYASESEEKEFPIELLSKIFAVDVFKGEERGCRGFGDSCTPGKNECCPNHACSNKHKWCKVYLGK</sequence>
<comment type="function">
    <text evidence="1">Lethal neurotoxin. Selectively blocks tetrodotoxin-sensitive voltage-gated sodium channels (Nav). Does not affect tetrodotoxin-resistant voltage-gated sodium channels or calcium channels (By similarity).</text>
</comment>
<comment type="subunit">
    <text evidence="1">Monomer.</text>
</comment>
<comment type="subcellular location">
    <subcellularLocation>
        <location evidence="1">Secreted</location>
    </subcellularLocation>
</comment>
<comment type="tissue specificity">
    <text>Expressed by the venom gland.</text>
</comment>
<comment type="domain">
    <text evidence="1">The presence of a 'disulfide through disulfide knot' structurally defines this protein as a knottin.</text>
</comment>
<comment type="similarity">
    <text evidence="3">Belongs to the neurotoxin 10 (Hwtx-1) family. 15 (Hntx-3) subfamily.</text>
</comment>
<organism>
    <name type="scientific">Cyriopagopus hainanus</name>
    <name type="common">Chinese bird spider</name>
    <name type="synonym">Haplopelma hainanum</name>
    <dbReference type="NCBI Taxonomy" id="209901"/>
    <lineage>
        <taxon>Eukaryota</taxon>
        <taxon>Metazoa</taxon>
        <taxon>Ecdysozoa</taxon>
        <taxon>Arthropoda</taxon>
        <taxon>Chelicerata</taxon>
        <taxon>Arachnida</taxon>
        <taxon>Araneae</taxon>
        <taxon>Mygalomorphae</taxon>
        <taxon>Theraphosidae</taxon>
        <taxon>Haplopelma</taxon>
    </lineage>
</organism>
<accession>D2Y202</accession>
<feature type="signal peptide" evidence="2">
    <location>
        <begin position="1"/>
        <end position="21"/>
    </location>
</feature>
<feature type="propeptide" id="PRO_0000400558" evidence="1">
    <location>
        <begin position="22"/>
        <end position="48"/>
    </location>
</feature>
<feature type="peptide" id="PRO_0000400559" description="Mu-theraphotoxin-Hhn2f">
    <location>
        <begin position="49"/>
        <end position="81"/>
    </location>
</feature>
<feature type="modified residue" description="Leucine amide" evidence="1">
    <location>
        <position position="81"/>
    </location>
</feature>
<feature type="disulfide bond" evidence="1">
    <location>
        <begin position="50"/>
        <end position="65"/>
    </location>
</feature>
<feature type="disulfide bond" evidence="1">
    <location>
        <begin position="57"/>
        <end position="70"/>
    </location>
</feature>
<feature type="disulfide bond" evidence="1">
    <location>
        <begin position="64"/>
        <end position="77"/>
    </location>
</feature>
<protein>
    <recommendedName>
        <fullName>Mu-theraphotoxin-Hhn2f</fullName>
        <shortName>Mu-TRTX-Hhn2f</shortName>
    </recommendedName>
    <alternativeName>
        <fullName>Hainantoxin-III-13</fullName>
        <shortName>HNTX-III-13</shortName>
    </alternativeName>
</protein>
<dbReference type="EMBL" id="GU292879">
    <property type="protein sequence ID" value="ADB56695.1"/>
    <property type="molecule type" value="mRNA"/>
</dbReference>
<dbReference type="SMR" id="D2Y202"/>
<dbReference type="ArachnoServer" id="AS002069">
    <property type="toxin name" value="mu-theraphotoxin-Hhn2f"/>
</dbReference>
<dbReference type="GO" id="GO:0005576">
    <property type="term" value="C:extracellular region"/>
    <property type="evidence" value="ECO:0007669"/>
    <property type="project" value="UniProtKB-SubCell"/>
</dbReference>
<dbReference type="GO" id="GO:0044231">
    <property type="term" value="C:host cell presynaptic membrane"/>
    <property type="evidence" value="ECO:0007669"/>
    <property type="project" value="UniProtKB-KW"/>
</dbReference>
<dbReference type="GO" id="GO:0008200">
    <property type="term" value="F:ion channel inhibitor activity"/>
    <property type="evidence" value="ECO:0007669"/>
    <property type="project" value="InterPro"/>
</dbReference>
<dbReference type="GO" id="GO:0017080">
    <property type="term" value="F:sodium channel regulator activity"/>
    <property type="evidence" value="ECO:0007669"/>
    <property type="project" value="UniProtKB-KW"/>
</dbReference>
<dbReference type="GO" id="GO:0090729">
    <property type="term" value="F:toxin activity"/>
    <property type="evidence" value="ECO:0007669"/>
    <property type="project" value="UniProtKB-KW"/>
</dbReference>
<dbReference type="InterPro" id="IPR011696">
    <property type="entry name" value="Huwentoxin-1"/>
</dbReference>
<dbReference type="InterPro" id="IPR013140">
    <property type="entry name" value="Huwentoxin_CS1"/>
</dbReference>
<dbReference type="Pfam" id="PF07740">
    <property type="entry name" value="Toxin_12"/>
    <property type="match status" value="1"/>
</dbReference>
<dbReference type="SUPFAM" id="SSF57059">
    <property type="entry name" value="omega toxin-like"/>
    <property type="match status" value="1"/>
</dbReference>
<dbReference type="PROSITE" id="PS60021">
    <property type="entry name" value="HWTX_1"/>
    <property type="match status" value="1"/>
</dbReference>
<evidence type="ECO:0000250" key="1"/>
<evidence type="ECO:0000255" key="2"/>
<evidence type="ECO:0000305" key="3"/>
<reference key="1">
    <citation type="journal article" date="2010" name="J. Proteome Res.">
        <title>Molecular diversification of peptide toxins from the tarantula Haplopelma hainanum (Ornithoctonus hainana) venom based on transcriptomic, peptidomic, and genomic analyses.</title>
        <authorList>
            <person name="Tang X."/>
            <person name="Zhang Y."/>
            <person name="Hu W."/>
            <person name="Xu D."/>
            <person name="Tao H."/>
            <person name="Yang X."/>
            <person name="Li Y."/>
            <person name="Jiang L."/>
            <person name="Liang S."/>
        </authorList>
    </citation>
    <scope>NUCLEOTIDE SEQUENCE [LARGE SCALE MRNA]</scope>
    <source>
        <tissue>Venom gland</tissue>
    </source>
</reference>